<name>RS2_PROM2</name>
<sequence length="234" mass="26355">MAVVSLSEMMEAGAHFGHQTRRWNPKMSKYIYCARNGVHIIDLVKTALCMNNAYKWTRNAAKSGKRFLFVGTKKQASDVVAQEATRCGAAYVNQRWLGGMLTNWTTMKARIERLKDLERMESSGSIAMRPKKEAAVLRRELERLQKYLGGLKGMRRLPDVVVLVDQRRESNAVLEARKLDISLVSMLDTNCDPDLCEVPIPCNDDAVRSVQLILGRLADAINEGRKGSNAERKN</sequence>
<proteinExistence type="inferred from homology"/>
<gene>
    <name evidence="1" type="primary">rpsB</name>
    <name evidence="1" type="synonym">rps2</name>
    <name type="ordered locus">P9215_08471</name>
</gene>
<dbReference type="EMBL" id="CP000825">
    <property type="protein sequence ID" value="ABV50462.1"/>
    <property type="molecule type" value="Genomic_DNA"/>
</dbReference>
<dbReference type="RefSeq" id="WP_011818259.1">
    <property type="nucleotide sequence ID" value="NC_009840.1"/>
</dbReference>
<dbReference type="SMR" id="A8G4D1"/>
<dbReference type="STRING" id="93060.P9215_08471"/>
<dbReference type="KEGG" id="pmh:P9215_08471"/>
<dbReference type="eggNOG" id="COG0052">
    <property type="taxonomic scope" value="Bacteria"/>
</dbReference>
<dbReference type="HOGENOM" id="CLU_040318_1_2_3"/>
<dbReference type="OrthoDB" id="9808036at2"/>
<dbReference type="Proteomes" id="UP000002014">
    <property type="component" value="Chromosome"/>
</dbReference>
<dbReference type="GO" id="GO:0022627">
    <property type="term" value="C:cytosolic small ribosomal subunit"/>
    <property type="evidence" value="ECO:0007669"/>
    <property type="project" value="TreeGrafter"/>
</dbReference>
<dbReference type="GO" id="GO:0003735">
    <property type="term" value="F:structural constituent of ribosome"/>
    <property type="evidence" value="ECO:0007669"/>
    <property type="project" value="InterPro"/>
</dbReference>
<dbReference type="GO" id="GO:0006412">
    <property type="term" value="P:translation"/>
    <property type="evidence" value="ECO:0007669"/>
    <property type="project" value="UniProtKB-UniRule"/>
</dbReference>
<dbReference type="CDD" id="cd01425">
    <property type="entry name" value="RPS2"/>
    <property type="match status" value="1"/>
</dbReference>
<dbReference type="FunFam" id="1.10.287.610:FF:000001">
    <property type="entry name" value="30S ribosomal protein S2"/>
    <property type="match status" value="1"/>
</dbReference>
<dbReference type="Gene3D" id="3.40.50.10490">
    <property type="entry name" value="Glucose-6-phosphate isomerase like protein, domain 1"/>
    <property type="match status" value="1"/>
</dbReference>
<dbReference type="Gene3D" id="1.10.287.610">
    <property type="entry name" value="Helix hairpin bin"/>
    <property type="match status" value="1"/>
</dbReference>
<dbReference type="HAMAP" id="MF_00291_B">
    <property type="entry name" value="Ribosomal_uS2_B"/>
    <property type="match status" value="1"/>
</dbReference>
<dbReference type="InterPro" id="IPR001865">
    <property type="entry name" value="Ribosomal_uS2"/>
</dbReference>
<dbReference type="InterPro" id="IPR005706">
    <property type="entry name" value="Ribosomal_uS2_bac/mit/plastid"/>
</dbReference>
<dbReference type="InterPro" id="IPR018130">
    <property type="entry name" value="Ribosomal_uS2_CS"/>
</dbReference>
<dbReference type="InterPro" id="IPR023591">
    <property type="entry name" value="Ribosomal_uS2_flav_dom_sf"/>
</dbReference>
<dbReference type="NCBIfam" id="TIGR01011">
    <property type="entry name" value="rpsB_bact"/>
    <property type="match status" value="1"/>
</dbReference>
<dbReference type="PANTHER" id="PTHR12534">
    <property type="entry name" value="30S RIBOSOMAL PROTEIN S2 PROKARYOTIC AND ORGANELLAR"/>
    <property type="match status" value="1"/>
</dbReference>
<dbReference type="PANTHER" id="PTHR12534:SF0">
    <property type="entry name" value="SMALL RIBOSOMAL SUBUNIT PROTEIN US2M"/>
    <property type="match status" value="1"/>
</dbReference>
<dbReference type="Pfam" id="PF00318">
    <property type="entry name" value="Ribosomal_S2"/>
    <property type="match status" value="1"/>
</dbReference>
<dbReference type="PRINTS" id="PR00395">
    <property type="entry name" value="RIBOSOMALS2"/>
</dbReference>
<dbReference type="SUPFAM" id="SSF52313">
    <property type="entry name" value="Ribosomal protein S2"/>
    <property type="match status" value="1"/>
</dbReference>
<dbReference type="PROSITE" id="PS00962">
    <property type="entry name" value="RIBOSOMAL_S2_1"/>
    <property type="match status" value="1"/>
</dbReference>
<reference key="1">
    <citation type="journal article" date="2007" name="PLoS Genet.">
        <title>Patterns and implications of gene gain and loss in the evolution of Prochlorococcus.</title>
        <authorList>
            <person name="Kettler G.C."/>
            <person name="Martiny A.C."/>
            <person name="Huang K."/>
            <person name="Zucker J."/>
            <person name="Coleman M.L."/>
            <person name="Rodrigue S."/>
            <person name="Chen F."/>
            <person name="Lapidus A."/>
            <person name="Ferriera S."/>
            <person name="Johnson J."/>
            <person name="Steglich C."/>
            <person name="Church G.M."/>
            <person name="Richardson P."/>
            <person name="Chisholm S.W."/>
        </authorList>
    </citation>
    <scope>NUCLEOTIDE SEQUENCE [LARGE SCALE GENOMIC DNA]</scope>
    <source>
        <strain>MIT 9215</strain>
    </source>
</reference>
<accession>A8G4D1</accession>
<evidence type="ECO:0000255" key="1">
    <source>
        <dbReference type="HAMAP-Rule" id="MF_00291"/>
    </source>
</evidence>
<evidence type="ECO:0000305" key="2"/>
<organism>
    <name type="scientific">Prochlorococcus marinus (strain MIT 9215)</name>
    <dbReference type="NCBI Taxonomy" id="93060"/>
    <lineage>
        <taxon>Bacteria</taxon>
        <taxon>Bacillati</taxon>
        <taxon>Cyanobacteriota</taxon>
        <taxon>Cyanophyceae</taxon>
        <taxon>Synechococcales</taxon>
        <taxon>Prochlorococcaceae</taxon>
        <taxon>Prochlorococcus</taxon>
    </lineage>
</organism>
<keyword id="KW-0687">Ribonucleoprotein</keyword>
<keyword id="KW-0689">Ribosomal protein</keyword>
<protein>
    <recommendedName>
        <fullName evidence="1">Small ribosomal subunit protein uS2</fullName>
    </recommendedName>
    <alternativeName>
        <fullName evidence="2">30S ribosomal protein S2</fullName>
    </alternativeName>
</protein>
<comment type="similarity">
    <text evidence="1">Belongs to the universal ribosomal protein uS2 family.</text>
</comment>
<feature type="chain" id="PRO_1000059263" description="Small ribosomal subunit protein uS2">
    <location>
        <begin position="1"/>
        <end position="234"/>
    </location>
</feature>